<protein>
    <recommendedName>
        <fullName evidence="1">tRNA sulfurtransferase</fullName>
        <ecNumber evidence="1">2.8.1.4</ecNumber>
    </recommendedName>
    <alternativeName>
        <fullName evidence="1">Sulfur carrier protein ThiS sulfurtransferase</fullName>
    </alternativeName>
    <alternativeName>
        <fullName evidence="1">Thiamine biosynthesis protein ThiI</fullName>
    </alternativeName>
    <alternativeName>
        <fullName evidence="1">tRNA 4-thiouridine synthase</fullName>
    </alternativeName>
</protein>
<feature type="chain" id="PRO_1000074263" description="tRNA sulfurtransferase">
    <location>
        <begin position="1"/>
        <end position="484"/>
    </location>
</feature>
<feature type="domain" description="THUMP" evidence="1">
    <location>
        <begin position="63"/>
        <end position="167"/>
    </location>
</feature>
<feature type="domain" description="Rhodanese" evidence="1">
    <location>
        <begin position="406"/>
        <end position="484"/>
    </location>
</feature>
<feature type="active site" description="Cysteine persulfide intermediate" evidence="1">
    <location>
        <position position="458"/>
    </location>
</feature>
<feature type="binding site" evidence="1">
    <location>
        <begin position="185"/>
        <end position="186"/>
    </location>
    <ligand>
        <name>ATP</name>
        <dbReference type="ChEBI" id="CHEBI:30616"/>
    </ligand>
</feature>
<feature type="binding site" evidence="1">
    <location>
        <position position="267"/>
    </location>
    <ligand>
        <name>ATP</name>
        <dbReference type="ChEBI" id="CHEBI:30616"/>
    </ligand>
</feature>
<feature type="binding site" evidence="1">
    <location>
        <position position="289"/>
    </location>
    <ligand>
        <name>ATP</name>
        <dbReference type="ChEBI" id="CHEBI:30616"/>
    </ligand>
</feature>
<feature type="binding site" evidence="1">
    <location>
        <position position="298"/>
    </location>
    <ligand>
        <name>ATP</name>
        <dbReference type="ChEBI" id="CHEBI:30616"/>
    </ligand>
</feature>
<feature type="disulfide bond" description="Redox-active" evidence="1">
    <location>
        <begin position="346"/>
        <end position="458"/>
    </location>
</feature>
<dbReference type="EC" id="2.8.1.4" evidence="1"/>
<dbReference type="EMBL" id="CP000563">
    <property type="protein sequence ID" value="ABN60880.1"/>
    <property type="molecule type" value="Genomic_DNA"/>
</dbReference>
<dbReference type="RefSeq" id="WP_006080887.1">
    <property type="nucleotide sequence ID" value="NC_009052.1"/>
</dbReference>
<dbReference type="SMR" id="A3D2B7"/>
<dbReference type="STRING" id="325240.Sbal_1362"/>
<dbReference type="GeneID" id="11771642"/>
<dbReference type="KEGG" id="sbl:Sbal_1362"/>
<dbReference type="HOGENOM" id="CLU_037952_4_1_6"/>
<dbReference type="OrthoDB" id="9773948at2"/>
<dbReference type="UniPathway" id="UPA00060"/>
<dbReference type="Proteomes" id="UP000001557">
    <property type="component" value="Chromosome"/>
</dbReference>
<dbReference type="GO" id="GO:0005829">
    <property type="term" value="C:cytosol"/>
    <property type="evidence" value="ECO:0007669"/>
    <property type="project" value="TreeGrafter"/>
</dbReference>
<dbReference type="GO" id="GO:0005524">
    <property type="term" value="F:ATP binding"/>
    <property type="evidence" value="ECO:0007669"/>
    <property type="project" value="UniProtKB-UniRule"/>
</dbReference>
<dbReference type="GO" id="GO:0004810">
    <property type="term" value="F:CCA tRNA nucleotidyltransferase activity"/>
    <property type="evidence" value="ECO:0007669"/>
    <property type="project" value="InterPro"/>
</dbReference>
<dbReference type="GO" id="GO:0000049">
    <property type="term" value="F:tRNA binding"/>
    <property type="evidence" value="ECO:0007669"/>
    <property type="project" value="UniProtKB-UniRule"/>
</dbReference>
<dbReference type="GO" id="GO:0140741">
    <property type="term" value="F:tRNA-uracil-4 sulfurtransferase activity"/>
    <property type="evidence" value="ECO:0007669"/>
    <property type="project" value="UniProtKB-EC"/>
</dbReference>
<dbReference type="GO" id="GO:0009228">
    <property type="term" value="P:thiamine biosynthetic process"/>
    <property type="evidence" value="ECO:0007669"/>
    <property type="project" value="UniProtKB-KW"/>
</dbReference>
<dbReference type="GO" id="GO:0009229">
    <property type="term" value="P:thiamine diphosphate biosynthetic process"/>
    <property type="evidence" value="ECO:0007669"/>
    <property type="project" value="UniProtKB-UniRule"/>
</dbReference>
<dbReference type="GO" id="GO:0052837">
    <property type="term" value="P:thiazole biosynthetic process"/>
    <property type="evidence" value="ECO:0007669"/>
    <property type="project" value="InterPro"/>
</dbReference>
<dbReference type="GO" id="GO:0002937">
    <property type="term" value="P:tRNA 4-thiouridine biosynthesis"/>
    <property type="evidence" value="ECO:0007669"/>
    <property type="project" value="TreeGrafter"/>
</dbReference>
<dbReference type="CDD" id="cd01712">
    <property type="entry name" value="PPase_ThiI"/>
    <property type="match status" value="1"/>
</dbReference>
<dbReference type="CDD" id="cd00158">
    <property type="entry name" value="RHOD"/>
    <property type="match status" value="1"/>
</dbReference>
<dbReference type="CDD" id="cd11716">
    <property type="entry name" value="THUMP_ThiI"/>
    <property type="match status" value="1"/>
</dbReference>
<dbReference type="FunFam" id="3.30.2130.30:FF:000002">
    <property type="entry name" value="tRNA sulfurtransferase"/>
    <property type="match status" value="1"/>
</dbReference>
<dbReference type="FunFam" id="3.40.250.10:FF:000003">
    <property type="entry name" value="tRNA sulfurtransferase"/>
    <property type="match status" value="1"/>
</dbReference>
<dbReference type="FunFam" id="3.40.50.620:FF:000029">
    <property type="entry name" value="tRNA sulfurtransferase"/>
    <property type="match status" value="1"/>
</dbReference>
<dbReference type="Gene3D" id="3.30.2130.30">
    <property type="match status" value="1"/>
</dbReference>
<dbReference type="Gene3D" id="3.40.50.620">
    <property type="entry name" value="HUPs"/>
    <property type="match status" value="1"/>
</dbReference>
<dbReference type="Gene3D" id="3.40.250.10">
    <property type="entry name" value="Rhodanese-like domain"/>
    <property type="match status" value="1"/>
</dbReference>
<dbReference type="HAMAP" id="MF_00021">
    <property type="entry name" value="ThiI"/>
    <property type="match status" value="1"/>
</dbReference>
<dbReference type="InterPro" id="IPR001763">
    <property type="entry name" value="Rhodanese-like_dom"/>
</dbReference>
<dbReference type="InterPro" id="IPR036873">
    <property type="entry name" value="Rhodanese-like_dom_sf"/>
</dbReference>
<dbReference type="InterPro" id="IPR014729">
    <property type="entry name" value="Rossmann-like_a/b/a_fold"/>
</dbReference>
<dbReference type="InterPro" id="IPR020536">
    <property type="entry name" value="ThiI_AANH"/>
</dbReference>
<dbReference type="InterPro" id="IPR054173">
    <property type="entry name" value="ThiI_fer"/>
</dbReference>
<dbReference type="InterPro" id="IPR049961">
    <property type="entry name" value="ThiI_N"/>
</dbReference>
<dbReference type="InterPro" id="IPR026340">
    <property type="entry name" value="THII_Thiazole_biosynth_dom"/>
</dbReference>
<dbReference type="InterPro" id="IPR004114">
    <property type="entry name" value="THUMP_dom"/>
</dbReference>
<dbReference type="InterPro" id="IPR049962">
    <property type="entry name" value="THUMP_ThiI"/>
</dbReference>
<dbReference type="InterPro" id="IPR003720">
    <property type="entry name" value="tRNA_STrfase"/>
</dbReference>
<dbReference type="InterPro" id="IPR050102">
    <property type="entry name" value="tRNA_sulfurtransferase_ThiI"/>
</dbReference>
<dbReference type="NCBIfam" id="TIGR04271">
    <property type="entry name" value="ThiI_C_thiazole"/>
    <property type="match status" value="1"/>
</dbReference>
<dbReference type="NCBIfam" id="TIGR00342">
    <property type="entry name" value="tRNA uracil 4-sulfurtransferase ThiI"/>
    <property type="match status" value="1"/>
</dbReference>
<dbReference type="PANTHER" id="PTHR43209">
    <property type="entry name" value="TRNA SULFURTRANSFERASE"/>
    <property type="match status" value="1"/>
</dbReference>
<dbReference type="PANTHER" id="PTHR43209:SF1">
    <property type="entry name" value="TRNA SULFURTRANSFERASE"/>
    <property type="match status" value="1"/>
</dbReference>
<dbReference type="Pfam" id="PF00581">
    <property type="entry name" value="Rhodanese"/>
    <property type="match status" value="1"/>
</dbReference>
<dbReference type="Pfam" id="PF02568">
    <property type="entry name" value="ThiI"/>
    <property type="match status" value="1"/>
</dbReference>
<dbReference type="Pfam" id="PF22025">
    <property type="entry name" value="ThiI_fer"/>
    <property type="match status" value="1"/>
</dbReference>
<dbReference type="Pfam" id="PF02926">
    <property type="entry name" value="THUMP"/>
    <property type="match status" value="1"/>
</dbReference>
<dbReference type="SMART" id="SM00981">
    <property type="entry name" value="THUMP"/>
    <property type="match status" value="1"/>
</dbReference>
<dbReference type="SUPFAM" id="SSF52402">
    <property type="entry name" value="Adenine nucleotide alpha hydrolases-like"/>
    <property type="match status" value="1"/>
</dbReference>
<dbReference type="SUPFAM" id="SSF52821">
    <property type="entry name" value="Rhodanese/Cell cycle control phosphatase"/>
    <property type="match status" value="1"/>
</dbReference>
<dbReference type="SUPFAM" id="SSF143437">
    <property type="entry name" value="THUMP domain-like"/>
    <property type="match status" value="1"/>
</dbReference>
<dbReference type="PROSITE" id="PS50206">
    <property type="entry name" value="RHODANESE_3"/>
    <property type="match status" value="1"/>
</dbReference>
<dbReference type="PROSITE" id="PS51165">
    <property type="entry name" value="THUMP"/>
    <property type="match status" value="1"/>
</dbReference>
<sequence>MKFIVKLYPEIMMKSKPVRMRFTKMLETNIRNVLKKVDEDAKVQRQWDRIMVMVPKDKPELAQAFGERLACIPGIAHVVQVDEYSFESVDDIYQQVLPVYRDQLAGKTFCVRVKRTGDHDFNSIEVERYVGGGLNQFTDALGVRLKNPDITVNLEIERDNLYMVTKRIEGLGGFPMATQEDVLSLISGGFDSGVSSYQFIKKGARTHYCFFNLGGAQHEIGVKQVAYHLWKTYGESHKVKFISVPFEPVVAEILERIDNGQMGVVLKRMMMRTAARIADRMGIQALVTGESLGQVSSQTLTNLNVIDRCTELLILRPLIAMDKQDIINESRKIGTEDFAKSMPEYCGVISQKPTVKAVLAKVEAEEKKFSEDLIDQIIAQSVTIDIREIAEQMDTRITETETVASIDTNQVVIDIRAPEEEESKPLQIEGIEIKRIPFFKLATQFADLDKQKTYLLYCERGVMSKLQALYLIEQGYTNVKVYRP</sequence>
<accession>A3D2B7</accession>
<proteinExistence type="inferred from homology"/>
<comment type="function">
    <text evidence="1">Catalyzes the ATP-dependent transfer of a sulfur to tRNA to produce 4-thiouridine in position 8 of tRNAs, which functions as a near-UV photosensor. Also catalyzes the transfer of sulfur to the sulfur carrier protein ThiS, forming ThiS-thiocarboxylate. This is a step in the synthesis of thiazole, in the thiamine biosynthesis pathway. The sulfur is donated as persulfide by IscS.</text>
</comment>
<comment type="catalytic activity">
    <reaction evidence="1">
        <text>[ThiI sulfur-carrier protein]-S-sulfanyl-L-cysteine + a uridine in tRNA + 2 reduced [2Fe-2S]-[ferredoxin] + ATP + H(+) = [ThiI sulfur-carrier protein]-L-cysteine + a 4-thiouridine in tRNA + 2 oxidized [2Fe-2S]-[ferredoxin] + AMP + diphosphate</text>
        <dbReference type="Rhea" id="RHEA:24176"/>
        <dbReference type="Rhea" id="RHEA-COMP:10000"/>
        <dbReference type="Rhea" id="RHEA-COMP:10001"/>
        <dbReference type="Rhea" id="RHEA-COMP:13337"/>
        <dbReference type="Rhea" id="RHEA-COMP:13338"/>
        <dbReference type="Rhea" id="RHEA-COMP:13339"/>
        <dbReference type="Rhea" id="RHEA-COMP:13340"/>
        <dbReference type="ChEBI" id="CHEBI:15378"/>
        <dbReference type="ChEBI" id="CHEBI:29950"/>
        <dbReference type="ChEBI" id="CHEBI:30616"/>
        <dbReference type="ChEBI" id="CHEBI:33019"/>
        <dbReference type="ChEBI" id="CHEBI:33737"/>
        <dbReference type="ChEBI" id="CHEBI:33738"/>
        <dbReference type="ChEBI" id="CHEBI:61963"/>
        <dbReference type="ChEBI" id="CHEBI:65315"/>
        <dbReference type="ChEBI" id="CHEBI:136798"/>
        <dbReference type="ChEBI" id="CHEBI:456215"/>
        <dbReference type="EC" id="2.8.1.4"/>
    </reaction>
</comment>
<comment type="catalytic activity">
    <reaction evidence="1">
        <text>[ThiS sulfur-carrier protein]-C-terminal Gly-Gly-AMP + S-sulfanyl-L-cysteinyl-[cysteine desulfurase] + AH2 = [ThiS sulfur-carrier protein]-C-terminal-Gly-aminoethanethioate + L-cysteinyl-[cysteine desulfurase] + A + AMP + 2 H(+)</text>
        <dbReference type="Rhea" id="RHEA:43340"/>
        <dbReference type="Rhea" id="RHEA-COMP:12157"/>
        <dbReference type="Rhea" id="RHEA-COMP:12158"/>
        <dbReference type="Rhea" id="RHEA-COMP:12910"/>
        <dbReference type="Rhea" id="RHEA-COMP:19908"/>
        <dbReference type="ChEBI" id="CHEBI:13193"/>
        <dbReference type="ChEBI" id="CHEBI:15378"/>
        <dbReference type="ChEBI" id="CHEBI:17499"/>
        <dbReference type="ChEBI" id="CHEBI:29950"/>
        <dbReference type="ChEBI" id="CHEBI:61963"/>
        <dbReference type="ChEBI" id="CHEBI:90618"/>
        <dbReference type="ChEBI" id="CHEBI:232372"/>
        <dbReference type="ChEBI" id="CHEBI:456215"/>
    </reaction>
</comment>
<comment type="pathway">
    <text evidence="1">Cofactor biosynthesis; thiamine diphosphate biosynthesis.</text>
</comment>
<comment type="subcellular location">
    <subcellularLocation>
        <location evidence="1">Cytoplasm</location>
    </subcellularLocation>
</comment>
<comment type="similarity">
    <text evidence="1">Belongs to the ThiI family.</text>
</comment>
<evidence type="ECO:0000255" key="1">
    <source>
        <dbReference type="HAMAP-Rule" id="MF_00021"/>
    </source>
</evidence>
<name>THII_SHEB5</name>
<reference key="1">
    <citation type="submission" date="2007-02" db="EMBL/GenBank/DDBJ databases">
        <title>Complete sequence of chromosome of Shewanella baltica OS155.</title>
        <authorList>
            <consortium name="US DOE Joint Genome Institute"/>
            <person name="Copeland A."/>
            <person name="Lucas S."/>
            <person name="Lapidus A."/>
            <person name="Barry K."/>
            <person name="Detter J.C."/>
            <person name="Glavina del Rio T."/>
            <person name="Hammon N."/>
            <person name="Israni S."/>
            <person name="Dalin E."/>
            <person name="Tice H."/>
            <person name="Pitluck S."/>
            <person name="Sims D.R."/>
            <person name="Brettin T."/>
            <person name="Bruce D."/>
            <person name="Han C."/>
            <person name="Tapia R."/>
            <person name="Brainard J."/>
            <person name="Schmutz J."/>
            <person name="Larimer F."/>
            <person name="Land M."/>
            <person name="Hauser L."/>
            <person name="Kyrpides N."/>
            <person name="Mikhailova N."/>
            <person name="Brettar I."/>
            <person name="Klappenbach J."/>
            <person name="Konstantinidis K."/>
            <person name="Rodrigues J."/>
            <person name="Tiedje J."/>
            <person name="Richardson P."/>
        </authorList>
    </citation>
    <scope>NUCLEOTIDE SEQUENCE [LARGE SCALE GENOMIC DNA]</scope>
    <source>
        <strain>OS155 / ATCC BAA-1091</strain>
    </source>
</reference>
<keyword id="KW-0067">ATP-binding</keyword>
<keyword id="KW-0963">Cytoplasm</keyword>
<keyword id="KW-1015">Disulfide bond</keyword>
<keyword id="KW-0547">Nucleotide-binding</keyword>
<keyword id="KW-0676">Redox-active center</keyword>
<keyword id="KW-1185">Reference proteome</keyword>
<keyword id="KW-0694">RNA-binding</keyword>
<keyword id="KW-0784">Thiamine biosynthesis</keyword>
<keyword id="KW-0808">Transferase</keyword>
<keyword id="KW-0820">tRNA-binding</keyword>
<gene>
    <name evidence="1" type="primary">thiI</name>
    <name type="ordered locus">Sbal_1362</name>
</gene>
<organism>
    <name type="scientific">Shewanella baltica (strain OS155 / ATCC BAA-1091)</name>
    <dbReference type="NCBI Taxonomy" id="325240"/>
    <lineage>
        <taxon>Bacteria</taxon>
        <taxon>Pseudomonadati</taxon>
        <taxon>Pseudomonadota</taxon>
        <taxon>Gammaproteobacteria</taxon>
        <taxon>Alteromonadales</taxon>
        <taxon>Shewanellaceae</taxon>
        <taxon>Shewanella</taxon>
    </lineage>
</organism>